<gene>
    <name evidence="11" type="primary">MOGS</name>
    <name evidence="11" type="synonym">GCS1</name>
</gene>
<feature type="chain" id="PRO_0000057710" description="Mannosyl-oligosaccharide glucosidase">
    <location>
        <begin position="1"/>
        <end position="837"/>
    </location>
</feature>
<feature type="topological domain" description="Cytoplasmic" evidence="4">
    <location>
        <begin position="1"/>
        <end position="38"/>
    </location>
</feature>
<feature type="transmembrane region" description="Helical; Signal-anchor for type II membrane protein" evidence="4">
    <location>
        <begin position="39"/>
        <end position="59"/>
    </location>
</feature>
<feature type="topological domain" description="Lumenal" evidence="4">
    <location>
        <begin position="60"/>
        <end position="837"/>
    </location>
</feature>
<feature type="region of interest" description="Disordered" evidence="5">
    <location>
        <begin position="1"/>
        <end position="39"/>
    </location>
</feature>
<feature type="region of interest" description="Required for endoplasmic reticulum targeting" evidence="1">
    <location>
        <begin position="76"/>
        <end position="137"/>
    </location>
</feature>
<feature type="short sequence motif" description="Endoplasmic reticulum targeting">
    <location>
        <begin position="3"/>
        <end position="9"/>
    </location>
</feature>
<feature type="compositionally biased region" description="Basic residues" evidence="5">
    <location>
        <begin position="1"/>
        <end position="10"/>
    </location>
</feature>
<feature type="compositionally biased region" description="Basic and acidic residues" evidence="5">
    <location>
        <begin position="17"/>
        <end position="33"/>
    </location>
</feature>
<feature type="active site" description="Proton donor" evidence="3">
    <location>
        <position position="583"/>
    </location>
</feature>
<feature type="active site" description="Proton acceptor" evidence="3">
    <location>
        <position position="807"/>
    </location>
</feature>
<feature type="glycosylation site" description="N-linked (GlcNAc...) asparagine" evidence="8">
    <location>
        <position position="657"/>
    </location>
</feature>
<feature type="splice variant" id="VSP_046921" description="In isoform 2." evidence="9">
    <location>
        <begin position="1"/>
        <end position="106"/>
    </location>
</feature>
<feature type="sequence variant" id="VAR_049233" description="In dbSNP:rs3213671.">
    <original>G</original>
    <variation>R</variation>
    <location>
        <position position="222"/>
    </location>
</feature>
<feature type="sequence variant" id="VAR_019361" description="In dbSNP:rs1063587." evidence="8">
    <original>E</original>
    <variation>Q</variation>
    <location>
        <position position="236"/>
    </location>
</feature>
<feature type="sequence variant" id="VAR_019362" description="In dbSNP:rs1063588." evidence="8">
    <original>D</original>
    <variation>N</variation>
    <location>
        <position position="239"/>
    </location>
</feature>
<feature type="sequence variant" id="VAR_049234" description="In dbSNP:rs2268416." evidence="8">
    <original>P</original>
    <variation>S</variation>
    <location>
        <position position="293"/>
    </location>
</feature>
<feature type="sequence variant" id="VAR_018966" description="In CDGIIb; loss of activity; dbSNP:rs121909291." evidence="6 7">
    <original>R</original>
    <variation>T</variation>
    <location>
        <position position="486"/>
    </location>
</feature>
<feature type="sequence variant" id="VAR_049235" description="In dbSNP:rs34075781.">
    <original>R</original>
    <variation>P</variation>
    <location>
        <position position="495"/>
    </location>
</feature>
<feature type="sequence variant" id="VAR_018967" description="In CDGIIb; loss of activity; dbSNP:rs121909292." evidence="6 7">
    <original>F</original>
    <variation>L</variation>
    <location>
        <position position="652"/>
    </location>
</feature>
<feature type="sequence variant" id="VAR_049236" description="In dbSNP:rs35533773.">
    <original>G</original>
    <variation>S</variation>
    <location>
        <position position="785"/>
    </location>
</feature>
<feature type="sequence conflict" description="In Ref. 1; CAA60683." evidence="9" ref="1">
    <original>I</original>
    <variation>F</variation>
    <location>
        <position position="330"/>
    </location>
</feature>
<feature type="sequence conflict" description="In Ref. 1; CAA60683." evidence="9" ref="1">
    <original>V</original>
    <variation>A</variation>
    <location>
        <position position="389"/>
    </location>
</feature>
<feature type="sequence conflict" description="In Ref. 1; CAA60683." evidence="9" ref="1">
    <original>A</original>
    <variation>G</variation>
    <location>
        <position position="605"/>
    </location>
</feature>
<feature type="sequence conflict" description="In Ref. 1; CAA60683." evidence="9" ref="1">
    <location>
        <position position="818"/>
    </location>
</feature>
<proteinExistence type="evidence at protein level"/>
<keyword id="KW-0025">Alternative splicing</keyword>
<keyword id="KW-0225">Disease variant</keyword>
<keyword id="KW-0256">Endoplasmic reticulum</keyword>
<keyword id="KW-0325">Glycoprotein</keyword>
<keyword id="KW-0326">Glycosidase</keyword>
<keyword id="KW-0378">Hydrolase</keyword>
<keyword id="KW-0472">Membrane</keyword>
<keyword id="KW-1267">Proteomics identification</keyword>
<keyword id="KW-1185">Reference proteome</keyword>
<keyword id="KW-0735">Signal-anchor</keyword>
<keyword id="KW-0812">Transmembrane</keyword>
<keyword id="KW-1133">Transmembrane helix</keyword>
<sequence>MARGERRRRAVPAEGVRTAERAARGGPGRRDGRGGGPRSTAGGVALAVVVLSLALGMSGRWVLAWYRARRAVTLHSAPPVLPADSSSPAVAPDLFWGTYRPHVYFGMKTRSPKPLLTGLMWAQQGTTPGTPKLRHTCEQGDGVGPYGWEFHDGLSFGRQHIQDGALRLTTEFVKRPGGQHGGDWSWRVTVEPQDSGTSALPLVSLFFYVVTDGKEVLLPEVGAKGQLKFISGHTSELGDFRFTLLPPTSPGDTAPKYGSYNVFWTSNPGLPLLTEMVKSRLNSWFQHRPPGAPPERYLGLPGSLKWEDRGPSGQGQGQFLIQQVTLKIPISIEFVFESGSAQAGGNQALPRLAGSLLTQALESHAEGFRERFEKTFQLKEKGLSSGEQVLGQAALSGLLGGIGYFYGQGLVLPDIGVEGSEQKVDPALFPPVPLFTAVPSRSFFPRGFLWDEGFHQLVVQRWDPSLTREALGHWLGLLNADGWIGREQILGDEARARVPPEFLVQRAVHANPPTLLLPVAHMLEVGDPDDLAFLRKALPRLHAWFSWLHQSQAGPLPLSYRWRGRDPALPTLLNPKTLPSGLDDYPRASHPSVTERHLDLRCWVALGARVLTRLAEHLGEAEVAAELGPLAASLEAAESLDELHWAPELGVFADFGNHTKAVQLKPRPPQGLVRVVGRPQPQLQYVDALGYVSLFPLLLRLLDPTSSRLGPLLDILADSRHLWSPFGLRSLAASSSFYGQRNSEHDPPYWRGAVWLNVNYLALGALHHYGHLEGPHQARAAKLHGELRANVVGNVWRQYQATGFLWEQYSDRDGRGMGCRPFHGWTSLVLLAMAEDY</sequence>
<accession>Q13724</accession>
<accession>A8K938</accession>
<accession>F5H6D0</accession>
<accession>Q17RN9</accession>
<accession>Q8TCT5</accession>
<dbReference type="EC" id="3.2.1.106" evidence="8"/>
<dbReference type="EMBL" id="X87237">
    <property type="protein sequence ID" value="CAA60683.1"/>
    <property type="molecule type" value="mRNA"/>
</dbReference>
<dbReference type="EMBL" id="AJ422288">
    <property type="protein sequence ID" value="CAD19636.1"/>
    <property type="molecule type" value="Genomic_DNA"/>
</dbReference>
<dbReference type="EMBL" id="AK292553">
    <property type="protein sequence ID" value="BAF85242.1"/>
    <property type="molecule type" value="mRNA"/>
</dbReference>
<dbReference type="EMBL" id="AC005041">
    <property type="status" value="NOT_ANNOTATED_CDS"/>
    <property type="molecule type" value="Genomic_DNA"/>
</dbReference>
<dbReference type="EMBL" id="CH471053">
    <property type="protein sequence ID" value="EAW99653.1"/>
    <property type="molecule type" value="Genomic_DNA"/>
</dbReference>
<dbReference type="EMBL" id="BC117252">
    <property type="protein sequence ID" value="AAI17253.1"/>
    <property type="molecule type" value="mRNA"/>
</dbReference>
<dbReference type="EMBL" id="BC117250">
    <property type="protein sequence ID" value="AAI17251.1"/>
    <property type="molecule type" value="mRNA"/>
</dbReference>
<dbReference type="CCDS" id="CCDS42700.1">
    <molecule id="Q13724-1"/>
</dbReference>
<dbReference type="CCDS" id="CCDS54370.1">
    <molecule id="Q13724-2"/>
</dbReference>
<dbReference type="PIR" id="S66258">
    <property type="entry name" value="S66258"/>
</dbReference>
<dbReference type="RefSeq" id="NP_001139630.1">
    <molecule id="Q13724-2"/>
    <property type="nucleotide sequence ID" value="NM_001146158.2"/>
</dbReference>
<dbReference type="RefSeq" id="NP_006293.2">
    <molecule id="Q13724-1"/>
    <property type="nucleotide sequence ID" value="NM_006302.3"/>
</dbReference>
<dbReference type="SMR" id="Q13724"/>
<dbReference type="BioGRID" id="113599">
    <property type="interactions" value="230"/>
</dbReference>
<dbReference type="ELM" id="Q13724"/>
<dbReference type="FunCoup" id="Q13724">
    <property type="interactions" value="1469"/>
</dbReference>
<dbReference type="IntAct" id="Q13724">
    <property type="interactions" value="69"/>
</dbReference>
<dbReference type="MINT" id="Q13724"/>
<dbReference type="STRING" id="9606.ENSP00000410992"/>
<dbReference type="BindingDB" id="Q13724"/>
<dbReference type="ChEMBL" id="CHEMBL4684"/>
<dbReference type="CAZy" id="GH63">
    <property type="family name" value="Glycoside Hydrolase Family 63"/>
</dbReference>
<dbReference type="GlyConnect" id="1489">
    <property type="glycosylation" value="6 N-Linked glycans (1 site)"/>
</dbReference>
<dbReference type="GlyCosmos" id="Q13724">
    <property type="glycosylation" value="1 site, 7 glycans"/>
</dbReference>
<dbReference type="GlyGen" id="Q13724">
    <property type="glycosylation" value="2 sites, 7 N-linked glycans (1 site), 1 O-linked glycan (1 site)"/>
</dbReference>
<dbReference type="iPTMnet" id="Q13724"/>
<dbReference type="PhosphoSitePlus" id="Q13724"/>
<dbReference type="SwissPalm" id="Q13724"/>
<dbReference type="BioMuta" id="MOGS"/>
<dbReference type="DMDM" id="116242490"/>
<dbReference type="jPOST" id="Q13724"/>
<dbReference type="MassIVE" id="Q13724"/>
<dbReference type="PaxDb" id="9606-ENSP00000233616"/>
<dbReference type="PeptideAtlas" id="Q13724"/>
<dbReference type="ProteomicsDB" id="27150"/>
<dbReference type="ProteomicsDB" id="59667">
    <molecule id="Q13724-1"/>
</dbReference>
<dbReference type="Pumba" id="Q13724"/>
<dbReference type="Antibodypedia" id="2372">
    <property type="antibodies" value="183 antibodies from 25 providers"/>
</dbReference>
<dbReference type="DNASU" id="7841"/>
<dbReference type="Ensembl" id="ENST00000448666.7">
    <molecule id="Q13724-1"/>
    <property type="protein sequence ID" value="ENSP00000410992.3"/>
    <property type="gene ID" value="ENSG00000115275.15"/>
</dbReference>
<dbReference type="Ensembl" id="ENST00000452063.7">
    <molecule id="Q13724-2"/>
    <property type="protein sequence ID" value="ENSP00000388201.2"/>
    <property type="gene ID" value="ENSG00000115275.15"/>
</dbReference>
<dbReference type="GeneID" id="7841"/>
<dbReference type="KEGG" id="hsa:7841"/>
<dbReference type="MANE-Select" id="ENST00000448666.7">
    <property type="protein sequence ID" value="ENSP00000410992.3"/>
    <property type="RefSeq nucleotide sequence ID" value="NM_006302.3"/>
    <property type="RefSeq protein sequence ID" value="NP_006293.2"/>
</dbReference>
<dbReference type="UCSC" id="uc010ffi.4">
    <molecule id="Q13724-1"/>
    <property type="organism name" value="human"/>
</dbReference>
<dbReference type="AGR" id="HGNC:24862"/>
<dbReference type="CTD" id="7841"/>
<dbReference type="DisGeNET" id="7841"/>
<dbReference type="GeneCards" id="MOGS"/>
<dbReference type="GeneReviews" id="MOGS"/>
<dbReference type="HGNC" id="HGNC:24862">
    <property type="gene designation" value="MOGS"/>
</dbReference>
<dbReference type="HPA" id="ENSG00000115275">
    <property type="expression patterns" value="Low tissue specificity"/>
</dbReference>
<dbReference type="MalaCards" id="MOGS"/>
<dbReference type="MIM" id="601336">
    <property type="type" value="gene"/>
</dbReference>
<dbReference type="MIM" id="606056">
    <property type="type" value="phenotype"/>
</dbReference>
<dbReference type="neXtProt" id="NX_Q13724"/>
<dbReference type="OpenTargets" id="ENSG00000115275"/>
<dbReference type="Orphanet" id="79330">
    <property type="disease" value="MOGS-CDG"/>
</dbReference>
<dbReference type="PharmGKB" id="PA164723075"/>
<dbReference type="VEuPathDB" id="HostDB:ENSG00000115275"/>
<dbReference type="eggNOG" id="KOG2161">
    <property type="taxonomic scope" value="Eukaryota"/>
</dbReference>
<dbReference type="GeneTree" id="ENSGT00390000017452"/>
<dbReference type="HOGENOM" id="CLU_007380_1_0_1"/>
<dbReference type="InParanoid" id="Q13724"/>
<dbReference type="OMA" id="FNWYNTT"/>
<dbReference type="OrthoDB" id="410058at2759"/>
<dbReference type="PAN-GO" id="Q13724">
    <property type="GO annotations" value="3 GO annotations based on evolutionary models"/>
</dbReference>
<dbReference type="PhylomeDB" id="Q13724"/>
<dbReference type="TreeFam" id="TF300749"/>
<dbReference type="BioCyc" id="MetaCyc:HS03863-MONOMER"/>
<dbReference type="PathwayCommons" id="Q13724"/>
<dbReference type="Reactome" id="R-HSA-4793954">
    <property type="pathway name" value="Defective MOGS causes CDG-2b"/>
</dbReference>
<dbReference type="Reactome" id="R-HSA-532668">
    <property type="pathway name" value="N-glycan trimming in the ER and Calnexin/Calreticulin cycle"/>
</dbReference>
<dbReference type="Reactome" id="R-HSA-9683686">
    <property type="pathway name" value="Maturation of spike protein"/>
</dbReference>
<dbReference type="Reactome" id="R-HSA-9694548">
    <property type="pathway name" value="Maturation of spike protein"/>
</dbReference>
<dbReference type="SignaLink" id="Q13724"/>
<dbReference type="UniPathway" id="UPA00280"/>
<dbReference type="BioGRID-ORCS" id="7841">
    <property type="hits" value="69 hits in 1168 CRISPR screens"/>
</dbReference>
<dbReference type="CD-CODE" id="FB4E32DD">
    <property type="entry name" value="Presynaptic clusters and postsynaptic densities"/>
</dbReference>
<dbReference type="ChiTaRS" id="MOGS">
    <property type="organism name" value="human"/>
</dbReference>
<dbReference type="GeneWiki" id="GCS1"/>
<dbReference type="GenomeRNAi" id="7841"/>
<dbReference type="Pharos" id="Q13724">
    <property type="development level" value="Tbio"/>
</dbReference>
<dbReference type="PRO" id="PR:Q13724"/>
<dbReference type="Proteomes" id="UP000005640">
    <property type="component" value="Chromosome 2"/>
</dbReference>
<dbReference type="RNAct" id="Q13724">
    <property type="molecule type" value="protein"/>
</dbReference>
<dbReference type="Bgee" id="ENSG00000115275">
    <property type="expression patterns" value="Expressed in body of pancreas and 123 other cell types or tissues"/>
</dbReference>
<dbReference type="ExpressionAtlas" id="Q13724">
    <property type="expression patterns" value="baseline and differential"/>
</dbReference>
<dbReference type="GO" id="GO:0005783">
    <property type="term" value="C:endoplasmic reticulum"/>
    <property type="evidence" value="ECO:0000314"/>
    <property type="project" value="HPA"/>
</dbReference>
<dbReference type="GO" id="GO:0005789">
    <property type="term" value="C:endoplasmic reticulum membrane"/>
    <property type="evidence" value="ECO:0000318"/>
    <property type="project" value="GO_Central"/>
</dbReference>
<dbReference type="GO" id="GO:0070062">
    <property type="term" value="C:extracellular exosome"/>
    <property type="evidence" value="ECO:0007005"/>
    <property type="project" value="UniProtKB"/>
</dbReference>
<dbReference type="GO" id="GO:0016020">
    <property type="term" value="C:membrane"/>
    <property type="evidence" value="ECO:0007005"/>
    <property type="project" value="UniProtKB"/>
</dbReference>
<dbReference type="GO" id="GO:0004573">
    <property type="term" value="F:Glc3Man9GlcNAc2 oligosaccharide glucosidase activity"/>
    <property type="evidence" value="ECO:0000318"/>
    <property type="project" value="GO_Central"/>
</dbReference>
<dbReference type="GO" id="GO:0015926">
    <property type="term" value="F:glucosidase activity"/>
    <property type="evidence" value="ECO:0000304"/>
    <property type="project" value="ProtInc"/>
</dbReference>
<dbReference type="GO" id="GO:0009311">
    <property type="term" value="P:oligosaccharide metabolic process"/>
    <property type="evidence" value="ECO:0007669"/>
    <property type="project" value="InterPro"/>
</dbReference>
<dbReference type="GO" id="GO:0006457">
    <property type="term" value="P:protein folding"/>
    <property type="evidence" value="ECO:0000304"/>
    <property type="project" value="Reactome"/>
</dbReference>
<dbReference type="GO" id="GO:0006487">
    <property type="term" value="P:protein N-linked glycosylation"/>
    <property type="evidence" value="ECO:0000318"/>
    <property type="project" value="GO_Central"/>
</dbReference>
<dbReference type="GO" id="GO:0019082">
    <property type="term" value="P:viral protein processing"/>
    <property type="evidence" value="ECO:0000304"/>
    <property type="project" value="Reactome"/>
</dbReference>
<dbReference type="FunFam" id="2.70.98.110:FF:000001">
    <property type="entry name" value="Mannosyl-oligosaccharide glucosidase"/>
    <property type="match status" value="1"/>
</dbReference>
<dbReference type="FunFam" id="1.50.10.10:FF:000009">
    <property type="entry name" value="mannosyl-oligosaccharide glucosidase"/>
    <property type="match status" value="1"/>
</dbReference>
<dbReference type="Gene3D" id="1.50.10.10">
    <property type="match status" value="1"/>
</dbReference>
<dbReference type="Gene3D" id="2.70.98.110">
    <property type="entry name" value="Glycosyl hydrolase family 63, N-terminal domain"/>
    <property type="match status" value="1"/>
</dbReference>
<dbReference type="InterPro" id="IPR008928">
    <property type="entry name" value="6-hairpin_glycosidase_sf"/>
</dbReference>
<dbReference type="InterPro" id="IPR012341">
    <property type="entry name" value="6hp_glycosidase-like_sf"/>
</dbReference>
<dbReference type="InterPro" id="IPR031335">
    <property type="entry name" value="Glyco_hydro_63_C"/>
</dbReference>
<dbReference type="InterPro" id="IPR031631">
    <property type="entry name" value="Glyco_hydro_63N"/>
</dbReference>
<dbReference type="InterPro" id="IPR038518">
    <property type="entry name" value="Glyco_hydro_63N_sf"/>
</dbReference>
<dbReference type="InterPro" id="IPR004888">
    <property type="entry name" value="Glycoside_hydrolase_63"/>
</dbReference>
<dbReference type="PANTHER" id="PTHR10412">
    <property type="entry name" value="MANNOSYL-OLIGOSACCHARIDE GLUCOSIDASE"/>
    <property type="match status" value="1"/>
</dbReference>
<dbReference type="PANTHER" id="PTHR10412:SF11">
    <property type="entry name" value="MANNOSYL-OLIGOSACCHARIDE GLUCOSIDASE"/>
    <property type="match status" value="1"/>
</dbReference>
<dbReference type="Pfam" id="PF03200">
    <property type="entry name" value="Glyco_hydro_63"/>
    <property type="match status" value="1"/>
</dbReference>
<dbReference type="Pfam" id="PF16923">
    <property type="entry name" value="Glyco_hydro_63N"/>
    <property type="match status" value="1"/>
</dbReference>
<dbReference type="SUPFAM" id="SSF48208">
    <property type="entry name" value="Six-hairpin glycosidases"/>
    <property type="match status" value="1"/>
</dbReference>
<reference key="1">
    <citation type="journal article" date="1995" name="Eur. J. Biochem.">
        <title>Cloning and expression of glucosidase I from human hippocampus.</title>
        <authorList>
            <person name="Kalz-Fueller B."/>
            <person name="Bieberich E."/>
            <person name="Bause E."/>
        </authorList>
    </citation>
    <scope>NUCLEOTIDE SEQUENCE [MRNA] (ISOFORM 1)</scope>
    <scope>FUNCTION</scope>
    <scope>CATALYTIC ACTIVITY</scope>
    <scope>ACTIVITY REGULATION</scope>
    <scope>PATHWAY</scope>
    <scope>SUBCELLULAR LOCATION</scope>
    <scope>GLYCOSYLATION AT ASN-657</scope>
    <scope>VARIANTS GLN-236; ASN-239 AND SER-293</scope>
    <source>
        <tissue>Hippocampus</tissue>
    </source>
</reference>
<reference key="2">
    <citation type="journal article" date="1997" name="Eur. J. Biochem.">
        <authorList>
            <person name="Kalz-Fueller B."/>
            <person name="Bieberich E."/>
            <person name="Bause E."/>
        </authorList>
    </citation>
    <scope>ERRATUM OF PUBMED:7635146</scope>
</reference>
<reference key="3">
    <citation type="submission" date="2001-12" db="EMBL/GenBank/DDBJ databases">
        <authorList>
            <person name="Voelker C."/>
        </authorList>
    </citation>
    <scope>NUCLEOTIDE SEQUENCE [GENOMIC DNA]</scope>
</reference>
<reference key="4">
    <citation type="journal article" date="2004" name="Nat. Genet.">
        <title>Complete sequencing and characterization of 21,243 full-length human cDNAs.</title>
        <authorList>
            <person name="Ota T."/>
            <person name="Suzuki Y."/>
            <person name="Nishikawa T."/>
            <person name="Otsuki T."/>
            <person name="Sugiyama T."/>
            <person name="Irie R."/>
            <person name="Wakamatsu A."/>
            <person name="Hayashi K."/>
            <person name="Sato H."/>
            <person name="Nagai K."/>
            <person name="Kimura K."/>
            <person name="Makita H."/>
            <person name="Sekine M."/>
            <person name="Obayashi M."/>
            <person name="Nishi T."/>
            <person name="Shibahara T."/>
            <person name="Tanaka T."/>
            <person name="Ishii S."/>
            <person name="Yamamoto J."/>
            <person name="Saito K."/>
            <person name="Kawai Y."/>
            <person name="Isono Y."/>
            <person name="Nakamura Y."/>
            <person name="Nagahari K."/>
            <person name="Murakami K."/>
            <person name="Yasuda T."/>
            <person name="Iwayanagi T."/>
            <person name="Wagatsuma M."/>
            <person name="Shiratori A."/>
            <person name="Sudo H."/>
            <person name="Hosoiri T."/>
            <person name="Kaku Y."/>
            <person name="Kodaira H."/>
            <person name="Kondo H."/>
            <person name="Sugawara M."/>
            <person name="Takahashi M."/>
            <person name="Kanda K."/>
            <person name="Yokoi T."/>
            <person name="Furuya T."/>
            <person name="Kikkawa E."/>
            <person name="Omura Y."/>
            <person name="Abe K."/>
            <person name="Kamihara K."/>
            <person name="Katsuta N."/>
            <person name="Sato K."/>
            <person name="Tanikawa M."/>
            <person name="Yamazaki M."/>
            <person name="Ninomiya K."/>
            <person name="Ishibashi T."/>
            <person name="Yamashita H."/>
            <person name="Murakawa K."/>
            <person name="Fujimori K."/>
            <person name="Tanai H."/>
            <person name="Kimata M."/>
            <person name="Watanabe M."/>
            <person name="Hiraoka S."/>
            <person name="Chiba Y."/>
            <person name="Ishida S."/>
            <person name="Ono Y."/>
            <person name="Takiguchi S."/>
            <person name="Watanabe S."/>
            <person name="Yosida M."/>
            <person name="Hotuta T."/>
            <person name="Kusano J."/>
            <person name="Kanehori K."/>
            <person name="Takahashi-Fujii A."/>
            <person name="Hara H."/>
            <person name="Tanase T.-O."/>
            <person name="Nomura Y."/>
            <person name="Togiya S."/>
            <person name="Komai F."/>
            <person name="Hara R."/>
            <person name="Takeuchi K."/>
            <person name="Arita M."/>
            <person name="Imose N."/>
            <person name="Musashino K."/>
            <person name="Yuuki H."/>
            <person name="Oshima A."/>
            <person name="Sasaki N."/>
            <person name="Aotsuka S."/>
            <person name="Yoshikawa Y."/>
            <person name="Matsunawa H."/>
            <person name="Ichihara T."/>
            <person name="Shiohata N."/>
            <person name="Sano S."/>
            <person name="Moriya S."/>
            <person name="Momiyama H."/>
            <person name="Satoh N."/>
            <person name="Takami S."/>
            <person name="Terashima Y."/>
            <person name="Suzuki O."/>
            <person name="Nakagawa S."/>
            <person name="Senoh A."/>
            <person name="Mizoguchi H."/>
            <person name="Goto Y."/>
            <person name="Shimizu F."/>
            <person name="Wakebe H."/>
            <person name="Hishigaki H."/>
            <person name="Watanabe T."/>
            <person name="Sugiyama A."/>
            <person name="Takemoto M."/>
            <person name="Kawakami B."/>
            <person name="Yamazaki M."/>
            <person name="Watanabe K."/>
            <person name="Kumagai A."/>
            <person name="Itakura S."/>
            <person name="Fukuzumi Y."/>
            <person name="Fujimori Y."/>
            <person name="Komiyama M."/>
            <person name="Tashiro H."/>
            <person name="Tanigami A."/>
            <person name="Fujiwara T."/>
            <person name="Ono T."/>
            <person name="Yamada K."/>
            <person name="Fujii Y."/>
            <person name="Ozaki K."/>
            <person name="Hirao M."/>
            <person name="Ohmori Y."/>
            <person name="Kawabata A."/>
            <person name="Hikiji T."/>
            <person name="Kobatake N."/>
            <person name="Inagaki H."/>
            <person name="Ikema Y."/>
            <person name="Okamoto S."/>
            <person name="Okitani R."/>
            <person name="Kawakami T."/>
            <person name="Noguchi S."/>
            <person name="Itoh T."/>
            <person name="Shigeta K."/>
            <person name="Senba T."/>
            <person name="Matsumura K."/>
            <person name="Nakajima Y."/>
            <person name="Mizuno T."/>
            <person name="Morinaga M."/>
            <person name="Sasaki M."/>
            <person name="Togashi T."/>
            <person name="Oyama M."/>
            <person name="Hata H."/>
            <person name="Watanabe M."/>
            <person name="Komatsu T."/>
            <person name="Mizushima-Sugano J."/>
            <person name="Satoh T."/>
            <person name="Shirai Y."/>
            <person name="Takahashi Y."/>
            <person name="Nakagawa K."/>
            <person name="Okumura K."/>
            <person name="Nagase T."/>
            <person name="Nomura N."/>
            <person name="Kikuchi H."/>
            <person name="Masuho Y."/>
            <person name="Yamashita R."/>
            <person name="Nakai K."/>
            <person name="Yada T."/>
            <person name="Nakamura Y."/>
            <person name="Ohara O."/>
            <person name="Isogai T."/>
            <person name="Sugano S."/>
        </authorList>
    </citation>
    <scope>NUCLEOTIDE SEQUENCE [LARGE SCALE MRNA]</scope>
    <source>
        <tissue>Testis</tissue>
    </source>
</reference>
<reference key="5">
    <citation type="journal article" date="2005" name="Nature">
        <title>Generation and annotation of the DNA sequences of human chromosomes 2 and 4.</title>
        <authorList>
            <person name="Hillier L.W."/>
            <person name="Graves T.A."/>
            <person name="Fulton R.S."/>
            <person name="Fulton L.A."/>
            <person name="Pepin K.H."/>
            <person name="Minx P."/>
            <person name="Wagner-McPherson C."/>
            <person name="Layman D."/>
            <person name="Wylie K."/>
            <person name="Sekhon M."/>
            <person name="Becker M.C."/>
            <person name="Fewell G.A."/>
            <person name="Delehaunty K.D."/>
            <person name="Miner T.L."/>
            <person name="Nash W.E."/>
            <person name="Kremitzki C."/>
            <person name="Oddy L."/>
            <person name="Du H."/>
            <person name="Sun H."/>
            <person name="Bradshaw-Cordum H."/>
            <person name="Ali J."/>
            <person name="Carter J."/>
            <person name="Cordes M."/>
            <person name="Harris A."/>
            <person name="Isak A."/>
            <person name="van Brunt A."/>
            <person name="Nguyen C."/>
            <person name="Du F."/>
            <person name="Courtney L."/>
            <person name="Kalicki J."/>
            <person name="Ozersky P."/>
            <person name="Abbott S."/>
            <person name="Armstrong J."/>
            <person name="Belter E.A."/>
            <person name="Caruso L."/>
            <person name="Cedroni M."/>
            <person name="Cotton M."/>
            <person name="Davidson T."/>
            <person name="Desai A."/>
            <person name="Elliott G."/>
            <person name="Erb T."/>
            <person name="Fronick C."/>
            <person name="Gaige T."/>
            <person name="Haakenson W."/>
            <person name="Haglund K."/>
            <person name="Holmes A."/>
            <person name="Harkins R."/>
            <person name="Kim K."/>
            <person name="Kruchowski S.S."/>
            <person name="Strong C.M."/>
            <person name="Grewal N."/>
            <person name="Goyea E."/>
            <person name="Hou S."/>
            <person name="Levy A."/>
            <person name="Martinka S."/>
            <person name="Mead K."/>
            <person name="McLellan M.D."/>
            <person name="Meyer R."/>
            <person name="Randall-Maher J."/>
            <person name="Tomlinson C."/>
            <person name="Dauphin-Kohlberg S."/>
            <person name="Kozlowicz-Reilly A."/>
            <person name="Shah N."/>
            <person name="Swearengen-Shahid S."/>
            <person name="Snider J."/>
            <person name="Strong J.T."/>
            <person name="Thompson J."/>
            <person name="Yoakum M."/>
            <person name="Leonard S."/>
            <person name="Pearman C."/>
            <person name="Trani L."/>
            <person name="Radionenko M."/>
            <person name="Waligorski J.E."/>
            <person name="Wang C."/>
            <person name="Rock S.M."/>
            <person name="Tin-Wollam A.-M."/>
            <person name="Maupin R."/>
            <person name="Latreille P."/>
            <person name="Wendl M.C."/>
            <person name="Yang S.-P."/>
            <person name="Pohl C."/>
            <person name="Wallis J.W."/>
            <person name="Spieth J."/>
            <person name="Bieri T.A."/>
            <person name="Berkowicz N."/>
            <person name="Nelson J.O."/>
            <person name="Osborne J."/>
            <person name="Ding L."/>
            <person name="Meyer R."/>
            <person name="Sabo A."/>
            <person name="Shotland Y."/>
            <person name="Sinha P."/>
            <person name="Wohldmann P.E."/>
            <person name="Cook L.L."/>
            <person name="Hickenbotham M.T."/>
            <person name="Eldred J."/>
            <person name="Williams D."/>
            <person name="Jones T.A."/>
            <person name="She X."/>
            <person name="Ciccarelli F.D."/>
            <person name="Izaurralde E."/>
            <person name="Taylor J."/>
            <person name="Schmutz J."/>
            <person name="Myers R.M."/>
            <person name="Cox D.R."/>
            <person name="Huang X."/>
            <person name="McPherson J.D."/>
            <person name="Mardis E.R."/>
            <person name="Clifton S.W."/>
            <person name="Warren W.C."/>
            <person name="Chinwalla A.T."/>
            <person name="Eddy S.R."/>
            <person name="Marra M.A."/>
            <person name="Ovcharenko I."/>
            <person name="Furey T.S."/>
            <person name="Miller W."/>
            <person name="Eichler E.E."/>
            <person name="Bork P."/>
            <person name="Suyama M."/>
            <person name="Torrents D."/>
            <person name="Waterston R.H."/>
            <person name="Wilson R.K."/>
        </authorList>
    </citation>
    <scope>NUCLEOTIDE SEQUENCE [LARGE SCALE GENOMIC DNA]</scope>
</reference>
<reference key="6">
    <citation type="submission" date="2005-09" db="EMBL/GenBank/DDBJ databases">
        <authorList>
            <person name="Mural R.J."/>
            <person name="Istrail S."/>
            <person name="Sutton G.G."/>
            <person name="Florea L."/>
            <person name="Halpern A.L."/>
            <person name="Mobarry C.M."/>
            <person name="Lippert R."/>
            <person name="Walenz B."/>
            <person name="Shatkay H."/>
            <person name="Dew I."/>
            <person name="Miller J.R."/>
            <person name="Flanigan M.J."/>
            <person name="Edwards N.J."/>
            <person name="Bolanos R."/>
            <person name="Fasulo D."/>
            <person name="Halldorsson B.V."/>
            <person name="Hannenhalli S."/>
            <person name="Turner R."/>
            <person name="Yooseph S."/>
            <person name="Lu F."/>
            <person name="Nusskern D.R."/>
            <person name="Shue B.C."/>
            <person name="Zheng X.H."/>
            <person name="Zhong F."/>
            <person name="Delcher A.L."/>
            <person name="Huson D.H."/>
            <person name="Kravitz S.A."/>
            <person name="Mouchard L."/>
            <person name="Reinert K."/>
            <person name="Remington K.A."/>
            <person name="Clark A.G."/>
            <person name="Waterman M.S."/>
            <person name="Eichler E.E."/>
            <person name="Adams M.D."/>
            <person name="Hunkapiller M.W."/>
            <person name="Myers E.W."/>
            <person name="Venter J.C."/>
        </authorList>
    </citation>
    <scope>NUCLEOTIDE SEQUENCE [LARGE SCALE GENOMIC DNA]</scope>
</reference>
<reference key="7">
    <citation type="journal article" date="2004" name="Genome Res.">
        <title>The status, quality, and expansion of the NIH full-length cDNA project: the Mammalian Gene Collection (MGC).</title>
        <authorList>
            <consortium name="The MGC Project Team"/>
        </authorList>
    </citation>
    <scope>NUCLEOTIDE SEQUENCE [LARGE SCALE MRNA] (ISOFORM 1)</scope>
    <source>
        <tissue>Brain</tissue>
    </source>
</reference>
<reference key="8">
    <citation type="journal article" date="2011" name="BMC Syst. Biol.">
        <title>Initial characterization of the human central proteome.</title>
        <authorList>
            <person name="Burkard T.R."/>
            <person name="Planyavsky M."/>
            <person name="Kaupe I."/>
            <person name="Breitwieser F.P."/>
            <person name="Buerckstuemmer T."/>
            <person name="Bennett K.L."/>
            <person name="Superti-Furga G."/>
            <person name="Colinge J."/>
        </authorList>
    </citation>
    <scope>IDENTIFICATION BY MASS SPECTROMETRY [LARGE SCALE ANALYSIS]</scope>
</reference>
<reference key="9">
    <citation type="journal article" date="2014" name="J. Proteomics">
        <title>An enzyme assisted RP-RPLC approach for in-depth analysis of human liver phosphoproteome.</title>
        <authorList>
            <person name="Bian Y."/>
            <person name="Song C."/>
            <person name="Cheng K."/>
            <person name="Dong M."/>
            <person name="Wang F."/>
            <person name="Huang J."/>
            <person name="Sun D."/>
            <person name="Wang L."/>
            <person name="Ye M."/>
            <person name="Zou H."/>
        </authorList>
    </citation>
    <scope>IDENTIFICATION BY MASS SPECTROMETRY [LARGE SCALE ANALYSIS]</scope>
    <source>
        <tissue>Liver</tissue>
    </source>
</reference>
<reference key="10">
    <citation type="journal article" date="2015" name="Proteomics">
        <title>N-terminome analysis of the human mitochondrial proteome.</title>
        <authorList>
            <person name="Vaca Jacome A.S."/>
            <person name="Rabilloud T."/>
            <person name="Schaeffer-Reiss C."/>
            <person name="Rompais M."/>
            <person name="Ayoub D."/>
            <person name="Lane L."/>
            <person name="Bairoch A."/>
            <person name="Van Dorsselaer A."/>
            <person name="Carapito C."/>
        </authorList>
    </citation>
    <scope>IDENTIFICATION BY MASS SPECTROMETRY [LARGE SCALE ANALYSIS]</scope>
</reference>
<reference key="11">
    <citation type="journal article" date="2000" name="Am. J. Hum. Genet.">
        <title>A novel disorder caused by defective biosynthesis of N-linked oligosaccharides due to glucosidase I deficiency.</title>
        <authorList>
            <person name="De Praeter C.M."/>
            <person name="Gerwig G.J."/>
            <person name="Bause E."/>
            <person name="Nuytinck L.K."/>
            <person name="Vliegenthart J.F.G."/>
            <person name="Breuer W."/>
            <person name="Kamerling J.P."/>
            <person name="Espeel M.F."/>
            <person name="Martin J.-J."/>
            <person name="De Paepe A.M."/>
            <person name="Chan N.W.C."/>
            <person name="Dacremont G.A."/>
            <person name="Van Coster R.N."/>
        </authorList>
    </citation>
    <scope>VARIANTS CDGIIB THR-486 AND LEU-652</scope>
</reference>
<reference key="12">
    <citation type="journal article" date="2002" name="Glycobiology">
        <title>Processing of N-linked carbohydrate chains in a patient with glucosidase I deficiency (CDG type IIb).</title>
        <authorList>
            <person name="Voelker C."/>
            <person name="De Praeter C.M."/>
            <person name="Hardt B."/>
            <person name="Breuer W."/>
            <person name="Kalz-Fueller B."/>
            <person name="Van Coster R.N."/>
            <person name="Bause E."/>
        </authorList>
    </citation>
    <scope>CHARACTERIZATION OF VARIANTS CDGIIB THR-486 AND LEU-652</scope>
</reference>
<organism>
    <name type="scientific">Homo sapiens</name>
    <name type="common">Human</name>
    <dbReference type="NCBI Taxonomy" id="9606"/>
    <lineage>
        <taxon>Eukaryota</taxon>
        <taxon>Metazoa</taxon>
        <taxon>Chordata</taxon>
        <taxon>Craniata</taxon>
        <taxon>Vertebrata</taxon>
        <taxon>Euteleostomi</taxon>
        <taxon>Mammalia</taxon>
        <taxon>Eutheria</taxon>
        <taxon>Euarchontoglires</taxon>
        <taxon>Primates</taxon>
        <taxon>Haplorrhini</taxon>
        <taxon>Catarrhini</taxon>
        <taxon>Hominidae</taxon>
        <taxon>Homo</taxon>
    </lineage>
</organism>
<evidence type="ECO:0000250" key="1"/>
<evidence type="ECO:0000250" key="2">
    <source>
        <dbReference type="UniProtKB" id="O88941"/>
    </source>
</evidence>
<evidence type="ECO:0000250" key="3">
    <source>
        <dbReference type="UniProtKB" id="Q80UM7"/>
    </source>
</evidence>
<evidence type="ECO:0000255" key="4"/>
<evidence type="ECO:0000256" key="5">
    <source>
        <dbReference type="SAM" id="MobiDB-lite"/>
    </source>
</evidence>
<evidence type="ECO:0000269" key="6">
    <source>
    </source>
</evidence>
<evidence type="ECO:0000269" key="7">
    <source>
    </source>
</evidence>
<evidence type="ECO:0000269" key="8">
    <source>
    </source>
</evidence>
<evidence type="ECO:0000305" key="9"/>
<evidence type="ECO:0000305" key="10">
    <source>
    </source>
</evidence>
<evidence type="ECO:0000312" key="11">
    <source>
        <dbReference type="HGNC" id="HGNC:24862"/>
    </source>
</evidence>
<comment type="function">
    <text evidence="8">In the context of N-glycan degradation, cleaves the distal alpha 1,2-linked glucose residue from the Glc(3)Man(9)GlcNAc(2) oligosaccharide precursor in a highly specific manner.</text>
</comment>
<comment type="catalytic activity">
    <reaction evidence="8">
        <text>N(4)-(alpha-D-Glc-(1-&gt;2)-alpha-D-Glc-(1-&gt;3)-alpha-D-Glc-(1-&gt;3)-alpha-D-Man-(1-&gt;2)-alpha-D-Man-(1-&gt;2)-alpha-D-Man-(1-&gt;3)-[alpha-D-Man-(1-&gt;2)-alpha-D-Man-(1-&gt;3)-[alpha-D-Man-(1-&gt;2)-alpha-D-Man-(1-&gt;6)]-alpha-D-Man-(1-&gt;6)]-beta-D-Man-(1-&gt;4)-beta-D-GlcNAc-(1-&gt;4)-beta-D-GlcNAc)-L-asparaginyl-[protein] + H2O = N(4)-(alpha-D-Glc-(1-&gt;3)-alpha-D-Glc-(1-&gt;3)-alpha-D-Man-(1-&gt;2)-alpha-D-Man-(1-&gt;2)-alpha-D-Man-(1-&gt;3)-[alpha-D-Man-(1-&gt;2)-alpha-D-Man-(1-&gt;3)-[alpha-D-Man-(1-&gt;2)-alpha-D-Man-(1-&gt;6)]-alpha-D-Man-(1-&gt;6)]-beta-D-Man-(1-&gt;4)-beta-D-GlcNAc-(1-&gt;4)-beta-D-GlcNAc)-L-asparaginyl-[protein] + beta-D-glucose</text>
        <dbReference type="Rhea" id="RHEA:55988"/>
        <dbReference type="Rhea" id="RHEA-COMP:12806"/>
        <dbReference type="Rhea" id="RHEA-COMP:14355"/>
        <dbReference type="ChEBI" id="CHEBI:15377"/>
        <dbReference type="ChEBI" id="CHEBI:15903"/>
        <dbReference type="ChEBI" id="CHEBI:59082"/>
        <dbReference type="ChEBI" id="CHEBI:132537"/>
        <dbReference type="EC" id="3.2.1.106"/>
    </reaction>
    <physiologicalReaction direction="left-to-right" evidence="8">
        <dbReference type="Rhea" id="RHEA:55989"/>
    </physiologicalReaction>
</comment>
<comment type="activity regulation">
    <text evidence="8">Inhibited by 1-deoxynojirimycin (40% inhibition) and N,N-dimethyl-deoxynojirimycin (85% inhibition).</text>
</comment>
<comment type="pathway">
    <text evidence="8">Glycan metabolism; N-glycan degradation.</text>
</comment>
<comment type="subcellular location">
    <subcellularLocation>
        <location evidence="8">Endoplasmic reticulum membrane</location>
        <topology evidence="2">Single-pass type II membrane protein</topology>
    </subcellularLocation>
</comment>
<comment type="alternative products">
    <event type="alternative splicing"/>
    <isoform>
        <id>Q13724-1</id>
        <name>1</name>
        <sequence type="displayed"/>
    </isoform>
    <isoform>
        <id>Q13724-2</id>
        <name>2</name>
        <sequence type="described" ref="VSP_046921"/>
    </isoform>
</comment>
<comment type="disease" evidence="6">
    <disease id="DI-02399">
        <name>Type IIb congenital disorder of glycosylation</name>
        <acronym>CDGIIb</acronym>
        <description>Characterized by marked generalized hypotonia and hypomotility of the neonate, dysmorphic features, including a prominent occiput, short palpebral fissures, retrognathia, high arched palate, generalized edema, and hypoplastic genitalia. Symptoms of the infant included hepatomegaly, hypoventilation, feeding problems and seizures. The clinical course was progressive and the infant did not survive more than a few months.</description>
        <dbReference type="MIM" id="606056"/>
    </disease>
    <text>The disease is caused by variants affecting the gene represented in this entry.</text>
</comment>
<comment type="similarity">
    <text evidence="9">Belongs to the glycosyl hydrolase 63 family.</text>
</comment>
<protein>
    <recommendedName>
        <fullName evidence="10">Mannosyl-oligosaccharide glucosidase</fullName>
        <ecNumber evidence="8">3.2.1.106</ecNumber>
    </recommendedName>
    <alternativeName>
        <fullName evidence="10">Processing A-glucosidase I</fullName>
    </alternativeName>
</protein>
<name>MOGS_HUMAN</name>